<feature type="chain" id="PRO_0000168063" description="Small ribosomal subunit protein bS20">
    <location>
        <begin position="1"/>
        <end position="89"/>
    </location>
</feature>
<feature type="region of interest" description="Disordered" evidence="2">
    <location>
        <begin position="1"/>
        <end position="22"/>
    </location>
</feature>
<feature type="compositionally biased region" description="Basic residues" evidence="2">
    <location>
        <begin position="1"/>
        <end position="12"/>
    </location>
</feature>
<gene>
    <name evidence="1" type="primary">rpsT</name>
    <name type="ordered locus">XAC1251</name>
</gene>
<comment type="function">
    <text evidence="1">Binds directly to 16S ribosomal RNA.</text>
</comment>
<comment type="similarity">
    <text evidence="1">Belongs to the bacterial ribosomal protein bS20 family.</text>
</comment>
<name>RS20_XANAC</name>
<reference key="1">
    <citation type="journal article" date="2002" name="Nature">
        <title>Comparison of the genomes of two Xanthomonas pathogens with differing host specificities.</title>
        <authorList>
            <person name="da Silva A.C.R."/>
            <person name="Ferro J.A."/>
            <person name="Reinach F.C."/>
            <person name="Farah C.S."/>
            <person name="Furlan L.R."/>
            <person name="Quaggio R.B."/>
            <person name="Monteiro-Vitorello C.B."/>
            <person name="Van Sluys M.A."/>
            <person name="Almeida N.F. Jr."/>
            <person name="Alves L.M.C."/>
            <person name="do Amaral A.M."/>
            <person name="Bertolini M.C."/>
            <person name="Camargo L.E.A."/>
            <person name="Camarotte G."/>
            <person name="Cannavan F."/>
            <person name="Cardozo J."/>
            <person name="Chambergo F."/>
            <person name="Ciapina L.P."/>
            <person name="Cicarelli R.M.B."/>
            <person name="Coutinho L.L."/>
            <person name="Cursino-Santos J.R."/>
            <person name="El-Dorry H."/>
            <person name="Faria J.B."/>
            <person name="Ferreira A.J.S."/>
            <person name="Ferreira R.C.C."/>
            <person name="Ferro M.I.T."/>
            <person name="Formighieri E.F."/>
            <person name="Franco M.C."/>
            <person name="Greggio C.C."/>
            <person name="Gruber A."/>
            <person name="Katsuyama A.M."/>
            <person name="Kishi L.T."/>
            <person name="Leite R.P."/>
            <person name="Lemos E.G.M."/>
            <person name="Lemos M.V.F."/>
            <person name="Locali E.C."/>
            <person name="Machado M.A."/>
            <person name="Madeira A.M.B.N."/>
            <person name="Martinez-Rossi N.M."/>
            <person name="Martins E.C."/>
            <person name="Meidanis J."/>
            <person name="Menck C.F.M."/>
            <person name="Miyaki C.Y."/>
            <person name="Moon D.H."/>
            <person name="Moreira L.M."/>
            <person name="Novo M.T.M."/>
            <person name="Okura V.K."/>
            <person name="Oliveira M.C."/>
            <person name="Oliveira V.R."/>
            <person name="Pereira H.A."/>
            <person name="Rossi A."/>
            <person name="Sena J.A.D."/>
            <person name="Silva C."/>
            <person name="de Souza R.F."/>
            <person name="Spinola L.A.F."/>
            <person name="Takita M.A."/>
            <person name="Tamura R.E."/>
            <person name="Teixeira E.C."/>
            <person name="Tezza R.I.D."/>
            <person name="Trindade dos Santos M."/>
            <person name="Truffi D."/>
            <person name="Tsai S.M."/>
            <person name="White F.F."/>
            <person name="Setubal J.C."/>
            <person name="Kitajima J.P."/>
        </authorList>
    </citation>
    <scope>NUCLEOTIDE SEQUENCE [LARGE SCALE GENOMIC DNA]</scope>
    <source>
        <strain>306</strain>
    </source>
</reference>
<evidence type="ECO:0000255" key="1">
    <source>
        <dbReference type="HAMAP-Rule" id="MF_00500"/>
    </source>
</evidence>
<evidence type="ECO:0000256" key="2">
    <source>
        <dbReference type="SAM" id="MobiDB-lite"/>
    </source>
</evidence>
<evidence type="ECO:0000305" key="3"/>
<protein>
    <recommendedName>
        <fullName evidence="1">Small ribosomal subunit protein bS20</fullName>
    </recommendedName>
    <alternativeName>
        <fullName evidence="3">30S ribosomal protein S20</fullName>
    </alternativeName>
</protein>
<sequence>MANIKSAKKRAKQTIVRNERNTGQRSMLRTAVKKVIKALDANDAAGAEAAFAVAQPILDRFSARGLIHKNKAARHKSRLTARIKAIKAA</sequence>
<organism>
    <name type="scientific">Xanthomonas axonopodis pv. citri (strain 306)</name>
    <dbReference type="NCBI Taxonomy" id="190486"/>
    <lineage>
        <taxon>Bacteria</taxon>
        <taxon>Pseudomonadati</taxon>
        <taxon>Pseudomonadota</taxon>
        <taxon>Gammaproteobacteria</taxon>
        <taxon>Lysobacterales</taxon>
        <taxon>Lysobacteraceae</taxon>
        <taxon>Xanthomonas</taxon>
    </lineage>
</organism>
<accession>Q8PN22</accession>
<keyword id="KW-0687">Ribonucleoprotein</keyword>
<keyword id="KW-0689">Ribosomal protein</keyword>
<keyword id="KW-0694">RNA-binding</keyword>
<keyword id="KW-0699">rRNA-binding</keyword>
<proteinExistence type="inferred from homology"/>
<dbReference type="EMBL" id="AE008923">
    <property type="protein sequence ID" value="AAM36123.1"/>
    <property type="molecule type" value="Genomic_DNA"/>
</dbReference>
<dbReference type="RefSeq" id="WP_003484323.1">
    <property type="nucleotide sequence ID" value="NC_003919.1"/>
</dbReference>
<dbReference type="SMR" id="Q8PN22"/>
<dbReference type="GeneID" id="97509601"/>
<dbReference type="KEGG" id="xac:XAC1251"/>
<dbReference type="eggNOG" id="COG0268">
    <property type="taxonomic scope" value="Bacteria"/>
</dbReference>
<dbReference type="HOGENOM" id="CLU_160655_4_0_6"/>
<dbReference type="Proteomes" id="UP000000576">
    <property type="component" value="Chromosome"/>
</dbReference>
<dbReference type="GO" id="GO:0005829">
    <property type="term" value="C:cytosol"/>
    <property type="evidence" value="ECO:0007669"/>
    <property type="project" value="TreeGrafter"/>
</dbReference>
<dbReference type="GO" id="GO:0015935">
    <property type="term" value="C:small ribosomal subunit"/>
    <property type="evidence" value="ECO:0007669"/>
    <property type="project" value="TreeGrafter"/>
</dbReference>
<dbReference type="GO" id="GO:0070181">
    <property type="term" value="F:small ribosomal subunit rRNA binding"/>
    <property type="evidence" value="ECO:0007669"/>
    <property type="project" value="TreeGrafter"/>
</dbReference>
<dbReference type="GO" id="GO:0003735">
    <property type="term" value="F:structural constituent of ribosome"/>
    <property type="evidence" value="ECO:0007669"/>
    <property type="project" value="InterPro"/>
</dbReference>
<dbReference type="GO" id="GO:0006412">
    <property type="term" value="P:translation"/>
    <property type="evidence" value="ECO:0007669"/>
    <property type="project" value="UniProtKB-UniRule"/>
</dbReference>
<dbReference type="FunFam" id="1.20.58.110:FF:000001">
    <property type="entry name" value="30S ribosomal protein S20"/>
    <property type="match status" value="1"/>
</dbReference>
<dbReference type="Gene3D" id="1.20.58.110">
    <property type="entry name" value="Ribosomal protein S20"/>
    <property type="match status" value="1"/>
</dbReference>
<dbReference type="HAMAP" id="MF_00500">
    <property type="entry name" value="Ribosomal_bS20"/>
    <property type="match status" value="1"/>
</dbReference>
<dbReference type="InterPro" id="IPR002583">
    <property type="entry name" value="Ribosomal_bS20"/>
</dbReference>
<dbReference type="InterPro" id="IPR036510">
    <property type="entry name" value="Ribosomal_bS20_sf"/>
</dbReference>
<dbReference type="NCBIfam" id="TIGR00029">
    <property type="entry name" value="S20"/>
    <property type="match status" value="1"/>
</dbReference>
<dbReference type="PANTHER" id="PTHR33398">
    <property type="entry name" value="30S RIBOSOMAL PROTEIN S20"/>
    <property type="match status" value="1"/>
</dbReference>
<dbReference type="PANTHER" id="PTHR33398:SF1">
    <property type="entry name" value="SMALL RIBOSOMAL SUBUNIT PROTEIN BS20C"/>
    <property type="match status" value="1"/>
</dbReference>
<dbReference type="Pfam" id="PF01649">
    <property type="entry name" value="Ribosomal_S20p"/>
    <property type="match status" value="1"/>
</dbReference>
<dbReference type="SUPFAM" id="SSF46992">
    <property type="entry name" value="Ribosomal protein S20"/>
    <property type="match status" value="1"/>
</dbReference>